<protein>
    <recommendedName>
        <fullName>Autophagy-related protein 9</fullName>
    </recommendedName>
</protein>
<name>ATG9_SCLS1</name>
<organism>
    <name type="scientific">Sclerotinia sclerotiorum (strain ATCC 18683 / 1980 / Ss-1)</name>
    <name type="common">White mold</name>
    <name type="synonym">Whetzelinia sclerotiorum</name>
    <dbReference type="NCBI Taxonomy" id="665079"/>
    <lineage>
        <taxon>Eukaryota</taxon>
        <taxon>Fungi</taxon>
        <taxon>Dikarya</taxon>
        <taxon>Ascomycota</taxon>
        <taxon>Pezizomycotina</taxon>
        <taxon>Leotiomycetes</taxon>
        <taxon>Helotiales</taxon>
        <taxon>Sclerotiniaceae</taxon>
        <taxon>Sclerotinia</taxon>
    </lineage>
</organism>
<keyword id="KW-0072">Autophagy</keyword>
<keyword id="KW-0968">Cytoplasmic vesicle</keyword>
<keyword id="KW-0256">Endoplasmic reticulum</keyword>
<keyword id="KW-0333">Golgi apparatus</keyword>
<keyword id="KW-0445">Lipid transport</keyword>
<keyword id="KW-0472">Membrane</keyword>
<keyword id="KW-0597">Phosphoprotein</keyword>
<keyword id="KW-1185">Reference proteome</keyword>
<keyword id="KW-0812">Transmembrane</keyword>
<keyword id="KW-1133">Transmembrane helix</keyword>
<keyword id="KW-0813">Transport</keyword>
<dbReference type="EMBL" id="CH476630">
    <property type="protein sequence ID" value="EDN92093.1"/>
    <property type="status" value="ALT_SEQ"/>
    <property type="molecule type" value="Genomic_DNA"/>
</dbReference>
<dbReference type="RefSeq" id="XP_001591329.1">
    <property type="nucleotide sequence ID" value="XM_001591279.1"/>
</dbReference>
<dbReference type="SMR" id="A7ERK1"/>
<dbReference type="FunCoup" id="A7ERK1">
    <property type="interactions" value="208"/>
</dbReference>
<dbReference type="STRING" id="665079.A7ERK1"/>
<dbReference type="GeneID" id="5487317"/>
<dbReference type="KEGG" id="ssl:SS1G_07955"/>
<dbReference type="VEuPathDB" id="FungiDB:sscle_11g082070"/>
<dbReference type="InParanoid" id="A7ERK1"/>
<dbReference type="OrthoDB" id="2020634at2759"/>
<dbReference type="Proteomes" id="UP000001312">
    <property type="component" value="Unassembled WGS sequence"/>
</dbReference>
<dbReference type="GO" id="GO:0005776">
    <property type="term" value="C:autophagosome"/>
    <property type="evidence" value="ECO:0000318"/>
    <property type="project" value="GO_Central"/>
</dbReference>
<dbReference type="GO" id="GO:0030659">
    <property type="term" value="C:cytoplasmic vesicle membrane"/>
    <property type="evidence" value="ECO:0007669"/>
    <property type="project" value="UniProtKB-SubCell"/>
</dbReference>
<dbReference type="GO" id="GO:0005789">
    <property type="term" value="C:endoplasmic reticulum membrane"/>
    <property type="evidence" value="ECO:0007669"/>
    <property type="project" value="UniProtKB-SubCell"/>
</dbReference>
<dbReference type="GO" id="GO:0000139">
    <property type="term" value="C:Golgi membrane"/>
    <property type="evidence" value="ECO:0007669"/>
    <property type="project" value="UniProtKB-SubCell"/>
</dbReference>
<dbReference type="GO" id="GO:0000407">
    <property type="term" value="C:phagophore assembly site"/>
    <property type="evidence" value="ECO:0000318"/>
    <property type="project" value="GO_Central"/>
</dbReference>
<dbReference type="GO" id="GO:0034045">
    <property type="term" value="C:phagophore assembly site membrane"/>
    <property type="evidence" value="ECO:0007669"/>
    <property type="project" value="UniProtKB-SubCell"/>
</dbReference>
<dbReference type="GO" id="GO:0006869">
    <property type="term" value="P:lipid transport"/>
    <property type="evidence" value="ECO:0007669"/>
    <property type="project" value="UniProtKB-KW"/>
</dbReference>
<dbReference type="GO" id="GO:0000423">
    <property type="term" value="P:mitophagy"/>
    <property type="evidence" value="ECO:0000318"/>
    <property type="project" value="GO_Central"/>
</dbReference>
<dbReference type="GO" id="GO:0034727">
    <property type="term" value="P:piecemeal microautophagy of the nucleus"/>
    <property type="evidence" value="ECO:0000318"/>
    <property type="project" value="GO_Central"/>
</dbReference>
<dbReference type="GO" id="GO:0034497">
    <property type="term" value="P:protein localization to phagophore assembly site"/>
    <property type="evidence" value="ECO:0000318"/>
    <property type="project" value="GO_Central"/>
</dbReference>
<dbReference type="GO" id="GO:0061709">
    <property type="term" value="P:reticulophagy"/>
    <property type="evidence" value="ECO:0000318"/>
    <property type="project" value="GO_Central"/>
</dbReference>
<dbReference type="InterPro" id="IPR007241">
    <property type="entry name" value="Autophagy-rel_prot_9"/>
</dbReference>
<dbReference type="PANTHER" id="PTHR13038">
    <property type="entry name" value="APG9 AUTOPHAGY 9"/>
    <property type="match status" value="1"/>
</dbReference>
<dbReference type="PANTHER" id="PTHR13038:SF10">
    <property type="entry name" value="AUTOPHAGY-RELATED PROTEIN 9"/>
    <property type="match status" value="1"/>
</dbReference>
<dbReference type="Pfam" id="PF04109">
    <property type="entry name" value="ATG9"/>
    <property type="match status" value="1"/>
</dbReference>
<accession>A7ERK1</accession>
<evidence type="ECO:0000250" key="1">
    <source>
        <dbReference type="UniProtKB" id="O74312"/>
    </source>
</evidence>
<evidence type="ECO:0000250" key="2">
    <source>
        <dbReference type="UniProtKB" id="Q12142"/>
    </source>
</evidence>
<evidence type="ECO:0000255" key="3"/>
<evidence type="ECO:0000256" key="4">
    <source>
        <dbReference type="SAM" id="MobiDB-lite"/>
    </source>
</evidence>
<evidence type="ECO:0000305" key="5"/>
<comment type="function">
    <text evidence="2">Phospholipid scramblase involved in autophagy and cytoplasm to vacuole transport (Cvt) vesicle formation. Cycles between the preautophagosomal structure/phagophore assembly site (PAS) and the cytoplasmic vesicle pool and supplies membrane for the growing autophagosome. Lipid scramblase activity plays a key role in preautophagosomal structure/phagophore assembly by distributing the phospholipids that arrive through atg2 from the cytoplasmic to the luminal leaflet of the bilayer, thereby driving autophagosomal membrane expansion. Required for mitophagy. Also involved in endoplasmic reticulum-specific autophagic process and is essential for the survival of cells subjected to severe ER stress. Different machineries are required for anterograde trafficking to the PAS during either the Cvt pathway or bulk autophagy and for retrograde trafficking.</text>
</comment>
<comment type="catalytic activity">
    <reaction evidence="2">
        <text>a 1,2-diacyl-sn-glycero-3-phosphocholine(in) = a 1,2-diacyl-sn-glycero-3-phosphocholine(out)</text>
        <dbReference type="Rhea" id="RHEA:38571"/>
        <dbReference type="ChEBI" id="CHEBI:57643"/>
    </reaction>
</comment>
<comment type="catalytic activity">
    <reaction evidence="2">
        <text>a 1,2-diacyl-sn-glycero-3-phospho-L-serine(in) = a 1,2-diacyl-sn-glycero-3-phospho-L-serine(out)</text>
        <dbReference type="Rhea" id="RHEA:38663"/>
        <dbReference type="ChEBI" id="CHEBI:57262"/>
    </reaction>
</comment>
<comment type="catalytic activity">
    <reaction evidence="2">
        <text>a 1,2-diacyl-sn-glycero-3-phosphoethanolamine(in) = a 1,2-diacyl-sn-glycero-3-phosphoethanolamine(out)</text>
        <dbReference type="Rhea" id="RHEA:38895"/>
        <dbReference type="ChEBI" id="CHEBI:64612"/>
    </reaction>
</comment>
<comment type="catalytic activity">
    <reaction evidence="2">
        <text>a 1,2-diacyl-sn-glycero-3-phospho-(1D-myo-inositol-3-phosphate)(in) = a 1,2-diacyl-sn-glycero-3-phospho-(1D-myo-inositol-3-phosphate)(out)</text>
        <dbReference type="Rhea" id="RHEA:67920"/>
        <dbReference type="ChEBI" id="CHEBI:58088"/>
    </reaction>
</comment>
<comment type="subunit">
    <text evidence="1">Homotrimer; forms a homotrimer with a central pore that forms a path between the two membrane leaflets.</text>
</comment>
<comment type="subcellular location">
    <subcellularLocation>
        <location evidence="2">Preautophagosomal structure membrane</location>
        <topology evidence="2">Multi-pass membrane protein</topology>
    </subcellularLocation>
    <subcellularLocation>
        <location evidence="2">Cytoplasmic vesicle membrane</location>
        <topology evidence="2">Multi-pass membrane protein</topology>
    </subcellularLocation>
    <subcellularLocation>
        <location evidence="2">Golgi apparatus membrane</location>
        <topology evidence="2">Multi-pass membrane protein</topology>
    </subcellularLocation>
    <subcellularLocation>
        <location evidence="2">Endoplasmic reticulum membrane</location>
        <topology evidence="2">Multi-pass membrane protein</topology>
    </subcellularLocation>
</comment>
<comment type="domain">
    <text evidence="1">Forms a homotrimer with a solvated central pore, which is connected laterally to the cytosol through the cavity within each protomer. Acts as a lipid scramblase that uses its central pore to function: the central pore opens laterally to accommodate lipid headgroups, thereby enabling lipid flipping and redistribution of lipids added to the outer leaflet of atg9-containing vesicles, thereby enabling growth into autophagosomes.</text>
</comment>
<comment type="PTM">
    <text evidence="2">Phosphorylated by atg1. Atg1 phosphorylation is required for preautophagosome elongation.</text>
</comment>
<comment type="similarity">
    <text evidence="5">Belongs to the ATG9 family.</text>
</comment>
<comment type="sequence caution" evidence="5">
    <conflict type="erroneous gene model prediction">
        <sequence resource="EMBL-CDS" id="EDN92093"/>
    </conflict>
</comment>
<sequence>MASNLISRLLPSNTQGRSIYDSLRAHDEASGSDMDVEERAAMAIDEENLRFKDDELGNPADVISGESVTESTAFLSDQQQTPQKQGYNRKGKGKGRSHNLAESPRLLEEDSDDDVPASLLIEGNNRHADPETPNHIRARQTALPKRAPAVPGPSAQQIKEERDRAHWEMTQEQQKLHEDGGNRATGVPHTPQSIPQNTGFYLTGSPKDKAMYRWVNVTNLDNFIGDLYAYFEGAGIWCIVLAKVIDILTLVFVAVFTTFLTQCVDYKKIYRGDARSLEYALVPQCTKKISGMSNVAIWLVCLFVLYRVYQLLTDLPRLMKMRDFFTYLLEIQDSNMQTVSFQDVIARLMALRDANPMTVERISPDNRKFVLGTQSKQRLDAHDIANRLMRKENYLIALFNKEILDLTLPLPFLQGRQLFSKTLQWNLEWCILDFVFNDYGQVRQLVLKDSHRRELSDGLRNRFLFAGLMNVICAPVIVIYVVIVYFFKYFNQYHKNPAALGSRGYTPLAEWKFREFNELHHLFNKRLNMSYPFASRYLNQFPNVKTAHMAKFITFMAGAVVSVLVVATVWDSEVLAGFDITSERPVLFYIGVFGSLWAITNGMIPEENEVFDPEYALRQVIEYTHYMPNHWQDRLHSDEVKREFSTLYQLKLMIFIEEVFSIIITPFLLWFSLPKCADQIIDFFREFTVHVDGVGYVCSFAVFDFKKGDGRAPTQGKAKSDMREDYYSTKHGKMAASYYNFLDNYLLNPKTGVPGHNPPGLRQQFYPPPAFPGLISSPTSGADLQSSRMGRSDVRPMNRAPYVPQQAVRTPRFPSNTTATGSPMASILLDPRHQPPSSELGARSVRRSSRSRYQARRGNNIIEDPMEDENGPGRPVAQPGRSYAVDDTVANLGESTWEVSPAKADADGQDEEEDGDGTGGAGVLGLVYQFQKAQTNGRPGVSIW</sequence>
<proteinExistence type="inferred from homology"/>
<reference key="1">
    <citation type="journal article" date="2011" name="PLoS Genet.">
        <title>Genomic analysis of the necrotrophic fungal pathogens Sclerotinia sclerotiorum and Botrytis cinerea.</title>
        <authorList>
            <person name="Amselem J."/>
            <person name="Cuomo C.A."/>
            <person name="van Kan J.A.L."/>
            <person name="Viaud M."/>
            <person name="Benito E.P."/>
            <person name="Couloux A."/>
            <person name="Coutinho P.M."/>
            <person name="de Vries R.P."/>
            <person name="Dyer P.S."/>
            <person name="Fillinger S."/>
            <person name="Fournier E."/>
            <person name="Gout L."/>
            <person name="Hahn M."/>
            <person name="Kohn L."/>
            <person name="Lapalu N."/>
            <person name="Plummer K.M."/>
            <person name="Pradier J.-M."/>
            <person name="Quevillon E."/>
            <person name="Sharon A."/>
            <person name="Simon A."/>
            <person name="ten Have A."/>
            <person name="Tudzynski B."/>
            <person name="Tudzynski P."/>
            <person name="Wincker P."/>
            <person name="Andrew M."/>
            <person name="Anthouard V."/>
            <person name="Beever R.E."/>
            <person name="Beffa R."/>
            <person name="Benoit I."/>
            <person name="Bouzid O."/>
            <person name="Brault B."/>
            <person name="Chen Z."/>
            <person name="Choquer M."/>
            <person name="Collemare J."/>
            <person name="Cotton P."/>
            <person name="Danchin E.G."/>
            <person name="Da Silva C."/>
            <person name="Gautier A."/>
            <person name="Giraud C."/>
            <person name="Giraud T."/>
            <person name="Gonzalez C."/>
            <person name="Grossetete S."/>
            <person name="Gueldener U."/>
            <person name="Henrissat B."/>
            <person name="Howlett B.J."/>
            <person name="Kodira C."/>
            <person name="Kretschmer M."/>
            <person name="Lappartient A."/>
            <person name="Leroch M."/>
            <person name="Levis C."/>
            <person name="Mauceli E."/>
            <person name="Neuveglise C."/>
            <person name="Oeser B."/>
            <person name="Pearson M."/>
            <person name="Poulain J."/>
            <person name="Poussereau N."/>
            <person name="Quesneville H."/>
            <person name="Rascle C."/>
            <person name="Schumacher J."/>
            <person name="Segurens B."/>
            <person name="Sexton A."/>
            <person name="Silva E."/>
            <person name="Sirven C."/>
            <person name="Soanes D.M."/>
            <person name="Talbot N.J."/>
            <person name="Templeton M."/>
            <person name="Yandava C."/>
            <person name="Yarden O."/>
            <person name="Zeng Q."/>
            <person name="Rollins J.A."/>
            <person name="Lebrun M.-H."/>
            <person name="Dickman M."/>
        </authorList>
    </citation>
    <scope>NUCLEOTIDE SEQUENCE [LARGE SCALE GENOMIC DNA]</scope>
    <source>
        <strain>ATCC 18683 / 1980 / Ss-1</strain>
    </source>
</reference>
<gene>
    <name type="primary">atg9</name>
    <name type="ORF">SS1G_07955</name>
</gene>
<feature type="chain" id="PRO_0000317916" description="Autophagy-related protein 9">
    <location>
        <begin position="1"/>
        <end position="944"/>
    </location>
</feature>
<feature type="topological domain" description="Cytoplasmic" evidence="5">
    <location>
        <begin position="1"/>
        <end position="235"/>
    </location>
</feature>
<feature type="transmembrane region" description="Helical" evidence="3">
    <location>
        <begin position="236"/>
        <end position="256"/>
    </location>
</feature>
<feature type="topological domain" description="Lumenal" evidence="5">
    <location>
        <begin position="257"/>
        <end position="294"/>
    </location>
</feature>
<feature type="transmembrane region" description="Helical" evidence="3">
    <location>
        <begin position="295"/>
        <end position="315"/>
    </location>
</feature>
<feature type="topological domain" description="Cytoplasmic" evidence="5">
    <location>
        <begin position="316"/>
        <end position="462"/>
    </location>
</feature>
<feature type="intramembrane region" evidence="1">
    <location>
        <begin position="463"/>
        <end position="483"/>
    </location>
</feature>
<feature type="topological domain" description="Cytoplasmic" evidence="5">
    <location>
        <begin position="484"/>
        <end position="549"/>
    </location>
</feature>
<feature type="transmembrane region" description="Helical" evidence="3">
    <location>
        <begin position="550"/>
        <end position="570"/>
    </location>
</feature>
<feature type="topological domain" description="Lumenal" evidence="5">
    <location>
        <begin position="571"/>
        <end position="584"/>
    </location>
</feature>
<feature type="transmembrane region" description="Helical" evidence="3">
    <location>
        <begin position="585"/>
        <end position="605"/>
    </location>
</feature>
<feature type="topological domain" description="Cytoplasmic" evidence="5">
    <location>
        <begin position="606"/>
        <end position="651"/>
    </location>
</feature>
<feature type="intramembrane region" evidence="1">
    <location>
        <begin position="652"/>
        <end position="672"/>
    </location>
</feature>
<feature type="topological domain" description="Cytoplasmic" evidence="5">
    <location>
        <begin position="673"/>
        <end position="944"/>
    </location>
</feature>
<feature type="region of interest" description="Disordered" evidence="4">
    <location>
        <begin position="70"/>
        <end position="113"/>
    </location>
</feature>
<feature type="region of interest" description="Disordered" evidence="4">
    <location>
        <begin position="142"/>
        <end position="199"/>
    </location>
</feature>
<feature type="region of interest" description="Disordered" evidence="4">
    <location>
        <begin position="753"/>
        <end position="881"/>
    </location>
</feature>
<feature type="region of interest" description="Disordered" evidence="4">
    <location>
        <begin position="894"/>
        <end position="922"/>
    </location>
</feature>
<feature type="compositionally biased region" description="Polar residues" evidence="4">
    <location>
        <begin position="70"/>
        <end position="86"/>
    </location>
</feature>
<feature type="compositionally biased region" description="Basic residues" evidence="4">
    <location>
        <begin position="87"/>
        <end position="97"/>
    </location>
</feature>
<feature type="compositionally biased region" description="Basic and acidic residues" evidence="4">
    <location>
        <begin position="158"/>
        <end position="181"/>
    </location>
</feature>
<feature type="compositionally biased region" description="Polar residues" evidence="4">
    <location>
        <begin position="190"/>
        <end position="199"/>
    </location>
</feature>
<feature type="compositionally biased region" description="Polar residues" evidence="4">
    <location>
        <begin position="776"/>
        <end position="789"/>
    </location>
</feature>
<feature type="compositionally biased region" description="Polar residues" evidence="4">
    <location>
        <begin position="813"/>
        <end position="823"/>
    </location>
</feature>
<feature type="compositionally biased region" description="Basic residues" evidence="4">
    <location>
        <begin position="844"/>
        <end position="855"/>
    </location>
</feature>
<feature type="compositionally biased region" description="Acidic residues" evidence="4">
    <location>
        <begin position="907"/>
        <end position="916"/>
    </location>
</feature>